<comment type="function">
    <text evidence="1">Involved in the gluconeogenesis. Catalyzes the conversion of oxaloacetate (OAA) to phosphoenolpyruvate (PEP) through direct phosphoryl transfer between the nucleoside triphosphate and OAA.</text>
</comment>
<comment type="catalytic activity">
    <reaction evidence="1">
        <text>oxaloacetate + ATP = phosphoenolpyruvate + ADP + CO2</text>
        <dbReference type="Rhea" id="RHEA:18617"/>
        <dbReference type="ChEBI" id="CHEBI:16452"/>
        <dbReference type="ChEBI" id="CHEBI:16526"/>
        <dbReference type="ChEBI" id="CHEBI:30616"/>
        <dbReference type="ChEBI" id="CHEBI:58702"/>
        <dbReference type="ChEBI" id="CHEBI:456216"/>
        <dbReference type="EC" id="4.1.1.49"/>
    </reaction>
</comment>
<comment type="cofactor">
    <cofactor evidence="1">
        <name>Mn(2+)</name>
        <dbReference type="ChEBI" id="CHEBI:29035"/>
    </cofactor>
    <text evidence="1">Binds 1 Mn(2+) ion per subunit.</text>
</comment>
<comment type="pathway">
    <text evidence="1">Carbohydrate biosynthesis; gluconeogenesis.</text>
</comment>
<comment type="subcellular location">
    <subcellularLocation>
        <location evidence="1">Cytoplasm</location>
    </subcellularLocation>
</comment>
<comment type="similarity">
    <text evidence="1">Belongs to the phosphoenolpyruvate carboxykinase (ATP) family.</text>
</comment>
<keyword id="KW-0067">ATP-binding</keyword>
<keyword id="KW-0963">Cytoplasm</keyword>
<keyword id="KW-0210">Decarboxylase</keyword>
<keyword id="KW-0312">Gluconeogenesis</keyword>
<keyword id="KW-0456">Lyase</keyword>
<keyword id="KW-0464">Manganese</keyword>
<keyword id="KW-0479">Metal-binding</keyword>
<keyword id="KW-0547">Nucleotide-binding</keyword>
<keyword id="KW-1185">Reference proteome</keyword>
<reference key="1">
    <citation type="submission" date="2006-01" db="EMBL/GenBank/DDBJ databases">
        <title>Complete sequence of Rhodopseudomonas palustris HaA2.</title>
        <authorList>
            <consortium name="US DOE Joint Genome Institute"/>
            <person name="Copeland A."/>
            <person name="Lucas S."/>
            <person name="Lapidus A."/>
            <person name="Barry K."/>
            <person name="Detter J.C."/>
            <person name="Glavina T."/>
            <person name="Hammon N."/>
            <person name="Israni S."/>
            <person name="Pitluck S."/>
            <person name="Chain P."/>
            <person name="Malfatti S."/>
            <person name="Shin M."/>
            <person name="Vergez L."/>
            <person name="Schmutz J."/>
            <person name="Larimer F."/>
            <person name="Land M."/>
            <person name="Hauser L."/>
            <person name="Pelletier D.A."/>
            <person name="Kyrpides N."/>
            <person name="Anderson I."/>
            <person name="Oda Y."/>
            <person name="Harwood C.S."/>
            <person name="Richardson P."/>
        </authorList>
    </citation>
    <scope>NUCLEOTIDE SEQUENCE [LARGE SCALE GENOMIC DNA]</scope>
    <source>
        <strain>HaA2</strain>
    </source>
</reference>
<accession>Q2J2Y8</accession>
<proteinExistence type="inferred from homology"/>
<dbReference type="EC" id="4.1.1.49" evidence="1"/>
<dbReference type="EMBL" id="CP000250">
    <property type="protein sequence ID" value="ABD05172.1"/>
    <property type="molecule type" value="Genomic_DNA"/>
</dbReference>
<dbReference type="RefSeq" id="WP_011439362.1">
    <property type="nucleotide sequence ID" value="NC_007778.1"/>
</dbReference>
<dbReference type="SMR" id="Q2J2Y8"/>
<dbReference type="STRING" id="316058.RPB_0461"/>
<dbReference type="KEGG" id="rpb:RPB_0461"/>
<dbReference type="eggNOG" id="COG1866">
    <property type="taxonomic scope" value="Bacteria"/>
</dbReference>
<dbReference type="HOGENOM" id="CLU_018247_0_1_5"/>
<dbReference type="OrthoDB" id="9806325at2"/>
<dbReference type="UniPathway" id="UPA00138"/>
<dbReference type="Proteomes" id="UP000008809">
    <property type="component" value="Chromosome"/>
</dbReference>
<dbReference type="GO" id="GO:0005829">
    <property type="term" value="C:cytosol"/>
    <property type="evidence" value="ECO:0007669"/>
    <property type="project" value="TreeGrafter"/>
</dbReference>
<dbReference type="GO" id="GO:0005524">
    <property type="term" value="F:ATP binding"/>
    <property type="evidence" value="ECO:0007669"/>
    <property type="project" value="UniProtKB-UniRule"/>
</dbReference>
<dbReference type="GO" id="GO:0046872">
    <property type="term" value="F:metal ion binding"/>
    <property type="evidence" value="ECO:0007669"/>
    <property type="project" value="UniProtKB-KW"/>
</dbReference>
<dbReference type="GO" id="GO:0004612">
    <property type="term" value="F:phosphoenolpyruvate carboxykinase (ATP) activity"/>
    <property type="evidence" value="ECO:0007669"/>
    <property type="project" value="UniProtKB-UniRule"/>
</dbReference>
<dbReference type="GO" id="GO:0006094">
    <property type="term" value="P:gluconeogenesis"/>
    <property type="evidence" value="ECO:0007669"/>
    <property type="project" value="UniProtKB-UniRule"/>
</dbReference>
<dbReference type="CDD" id="cd00484">
    <property type="entry name" value="PEPCK_ATP"/>
    <property type="match status" value="1"/>
</dbReference>
<dbReference type="Gene3D" id="3.90.228.20">
    <property type="match status" value="1"/>
</dbReference>
<dbReference type="Gene3D" id="3.40.449.10">
    <property type="entry name" value="Phosphoenolpyruvate Carboxykinase, domain 1"/>
    <property type="match status" value="1"/>
</dbReference>
<dbReference type="Gene3D" id="2.170.8.10">
    <property type="entry name" value="Phosphoenolpyruvate Carboxykinase, domain 2"/>
    <property type="match status" value="1"/>
</dbReference>
<dbReference type="HAMAP" id="MF_00453">
    <property type="entry name" value="PEPCK_ATP"/>
    <property type="match status" value="1"/>
</dbReference>
<dbReference type="InterPro" id="IPR001272">
    <property type="entry name" value="PEP_carboxykinase_ATP"/>
</dbReference>
<dbReference type="InterPro" id="IPR013035">
    <property type="entry name" value="PEP_carboxykinase_C"/>
</dbReference>
<dbReference type="InterPro" id="IPR008210">
    <property type="entry name" value="PEP_carboxykinase_N"/>
</dbReference>
<dbReference type="InterPro" id="IPR015994">
    <property type="entry name" value="PEPCK_ATP_CS"/>
</dbReference>
<dbReference type="NCBIfam" id="TIGR00224">
    <property type="entry name" value="pckA"/>
    <property type="match status" value="1"/>
</dbReference>
<dbReference type="NCBIfam" id="NF006820">
    <property type="entry name" value="PRK09344.1-2"/>
    <property type="match status" value="1"/>
</dbReference>
<dbReference type="NCBIfam" id="NF006821">
    <property type="entry name" value="PRK09344.1-3"/>
    <property type="match status" value="1"/>
</dbReference>
<dbReference type="NCBIfam" id="NF006822">
    <property type="entry name" value="PRK09344.1-4"/>
    <property type="match status" value="1"/>
</dbReference>
<dbReference type="PANTHER" id="PTHR30031:SF0">
    <property type="entry name" value="PHOSPHOENOLPYRUVATE CARBOXYKINASE (ATP)"/>
    <property type="match status" value="1"/>
</dbReference>
<dbReference type="PANTHER" id="PTHR30031">
    <property type="entry name" value="PHOSPHOENOLPYRUVATE CARBOXYKINASE ATP"/>
    <property type="match status" value="1"/>
</dbReference>
<dbReference type="Pfam" id="PF01293">
    <property type="entry name" value="PEPCK_ATP"/>
    <property type="match status" value="1"/>
</dbReference>
<dbReference type="PIRSF" id="PIRSF006294">
    <property type="entry name" value="PEP_crbxkin"/>
    <property type="match status" value="1"/>
</dbReference>
<dbReference type="SUPFAM" id="SSF68923">
    <property type="entry name" value="PEP carboxykinase N-terminal domain"/>
    <property type="match status" value="1"/>
</dbReference>
<dbReference type="SUPFAM" id="SSF53795">
    <property type="entry name" value="PEP carboxykinase-like"/>
    <property type="match status" value="1"/>
</dbReference>
<dbReference type="PROSITE" id="PS00532">
    <property type="entry name" value="PEPCK_ATP"/>
    <property type="match status" value="1"/>
</dbReference>
<sequence length="537" mass="58619">MQETGVHNGAHGADKFGLKNLKGVYWNFAAPQLYEHALKNGEAVLSADGALCADTGEFTGRSPKDKFTVRDATTETTMWWGGNQSITAEQFETLYQDFLKHAEGMTLFAQDLYGGADPSFQIKTRVFTELAWHSLFIRTLLRRPDRAALESFVPELTLIDLPSFRADPKRHGCRSENVVAIDFARKIVLIGGTQYAGEMKKSVFTTLNYYLPEKGVMPMHCSANVGPQGDTAIFFGLSGTGKTTLSADPNRTLIGDDEHGWGKDGVFNFEGGCYAKCIKLSPEAEPEIFAASSRFGAVLENVVLDEITRKPDFDDGSKTENTRSAYPLESIPNASLTGRAGQPKNVVMLAADAFGVMPPIAKLTPAQAMYHFLSGYTAKVAGTERGVTEPEPEFSTCFGSPFLPRDPSVYGNMLRELIAKHDVDCWLVNTGWTGGIYGTGHRMPIKVTRALLTAALDGSLRNVEFRTDPYFGFAVPTSLHGVPSDILDPVKTWADKAAFDATARKLVGMFQKNFAKFEAQVDADVRAAAPDVKMAAE</sequence>
<feature type="chain" id="PRO_1000026342" description="Phosphoenolpyruvate carboxykinase (ATP)">
    <location>
        <begin position="1"/>
        <end position="537"/>
    </location>
</feature>
<feature type="binding site" evidence="1">
    <location>
        <position position="61"/>
    </location>
    <ligand>
        <name>substrate</name>
    </ligand>
</feature>
<feature type="binding site" evidence="1">
    <location>
        <position position="195"/>
    </location>
    <ligand>
        <name>substrate</name>
    </ligand>
</feature>
<feature type="binding site" evidence="1">
    <location>
        <position position="201"/>
    </location>
    <ligand>
        <name>ATP</name>
        <dbReference type="ChEBI" id="CHEBI:30616"/>
    </ligand>
</feature>
<feature type="binding site" evidence="1">
    <location>
        <position position="201"/>
    </location>
    <ligand>
        <name>Mn(2+)</name>
        <dbReference type="ChEBI" id="CHEBI:29035"/>
    </ligand>
</feature>
<feature type="binding site" evidence="1">
    <location>
        <position position="201"/>
    </location>
    <ligand>
        <name>substrate</name>
    </ligand>
</feature>
<feature type="binding site" evidence="1">
    <location>
        <position position="220"/>
    </location>
    <ligand>
        <name>ATP</name>
        <dbReference type="ChEBI" id="CHEBI:30616"/>
    </ligand>
</feature>
<feature type="binding site" evidence="1">
    <location>
        <position position="220"/>
    </location>
    <ligand>
        <name>Mn(2+)</name>
        <dbReference type="ChEBI" id="CHEBI:29035"/>
    </ligand>
</feature>
<feature type="binding site" evidence="1">
    <location>
        <begin position="236"/>
        <end position="244"/>
    </location>
    <ligand>
        <name>ATP</name>
        <dbReference type="ChEBI" id="CHEBI:30616"/>
    </ligand>
</feature>
<feature type="binding site" evidence="1">
    <location>
        <position position="257"/>
    </location>
    <ligand>
        <name>Mn(2+)</name>
        <dbReference type="ChEBI" id="CHEBI:29035"/>
    </ligand>
</feature>
<feature type="binding site" evidence="1">
    <location>
        <position position="285"/>
    </location>
    <ligand>
        <name>ATP</name>
        <dbReference type="ChEBI" id="CHEBI:30616"/>
    </ligand>
</feature>
<feature type="binding site" evidence="1">
    <location>
        <position position="323"/>
    </location>
    <ligand>
        <name>ATP</name>
        <dbReference type="ChEBI" id="CHEBI:30616"/>
    </ligand>
</feature>
<feature type="binding site" evidence="1">
    <location>
        <position position="323"/>
    </location>
    <ligand>
        <name>substrate</name>
    </ligand>
</feature>
<feature type="binding site" evidence="1">
    <location>
        <position position="448"/>
    </location>
    <ligand>
        <name>ATP</name>
        <dbReference type="ChEBI" id="CHEBI:30616"/>
    </ligand>
</feature>
<evidence type="ECO:0000255" key="1">
    <source>
        <dbReference type="HAMAP-Rule" id="MF_00453"/>
    </source>
</evidence>
<protein>
    <recommendedName>
        <fullName evidence="1">Phosphoenolpyruvate carboxykinase (ATP)</fullName>
        <shortName evidence="1">PCK</shortName>
        <shortName evidence="1">PEP carboxykinase</shortName>
        <shortName evidence="1">PEPCK</shortName>
        <ecNumber evidence="1">4.1.1.49</ecNumber>
    </recommendedName>
</protein>
<name>PCKA_RHOP2</name>
<organism>
    <name type="scientific">Rhodopseudomonas palustris (strain HaA2)</name>
    <dbReference type="NCBI Taxonomy" id="316058"/>
    <lineage>
        <taxon>Bacteria</taxon>
        <taxon>Pseudomonadati</taxon>
        <taxon>Pseudomonadota</taxon>
        <taxon>Alphaproteobacteria</taxon>
        <taxon>Hyphomicrobiales</taxon>
        <taxon>Nitrobacteraceae</taxon>
        <taxon>Rhodopseudomonas</taxon>
    </lineage>
</organism>
<gene>
    <name evidence="1" type="primary">pckA</name>
    <name type="ordered locus">RPB_0461</name>
</gene>